<comment type="function">
    <text evidence="1">Specifically methylates the N7 position of guanine in position 527 of 16S rRNA.</text>
</comment>
<comment type="catalytic activity">
    <reaction evidence="1">
        <text>guanosine(527) in 16S rRNA + S-adenosyl-L-methionine = N(7)-methylguanosine(527) in 16S rRNA + S-adenosyl-L-homocysteine</text>
        <dbReference type="Rhea" id="RHEA:42732"/>
        <dbReference type="Rhea" id="RHEA-COMP:10209"/>
        <dbReference type="Rhea" id="RHEA-COMP:10210"/>
        <dbReference type="ChEBI" id="CHEBI:57856"/>
        <dbReference type="ChEBI" id="CHEBI:59789"/>
        <dbReference type="ChEBI" id="CHEBI:74269"/>
        <dbReference type="ChEBI" id="CHEBI:74480"/>
        <dbReference type="EC" id="2.1.1.170"/>
    </reaction>
</comment>
<comment type="subcellular location">
    <subcellularLocation>
        <location evidence="1">Cytoplasm</location>
    </subcellularLocation>
</comment>
<comment type="similarity">
    <text evidence="1">Belongs to the methyltransferase superfamily. RNA methyltransferase RsmG family.</text>
</comment>
<proteinExistence type="inferred from homology"/>
<keyword id="KW-0963">Cytoplasm</keyword>
<keyword id="KW-0489">Methyltransferase</keyword>
<keyword id="KW-0698">rRNA processing</keyword>
<keyword id="KW-0949">S-adenosyl-L-methionine</keyword>
<keyword id="KW-0808">Transferase</keyword>
<accession>B8CVV5</accession>
<dbReference type="EC" id="2.1.1.170" evidence="1"/>
<dbReference type="EMBL" id="CP000472">
    <property type="protein sequence ID" value="ACJ31781.1"/>
    <property type="molecule type" value="Genomic_DNA"/>
</dbReference>
<dbReference type="RefSeq" id="WP_020915104.1">
    <property type="nucleotide sequence ID" value="NC_011566.1"/>
</dbReference>
<dbReference type="SMR" id="B8CVV5"/>
<dbReference type="STRING" id="225849.swp_5166"/>
<dbReference type="KEGG" id="swp:swp_5166"/>
<dbReference type="eggNOG" id="COG0357">
    <property type="taxonomic scope" value="Bacteria"/>
</dbReference>
<dbReference type="HOGENOM" id="CLU_065341_2_2_6"/>
<dbReference type="OrthoDB" id="9808773at2"/>
<dbReference type="Proteomes" id="UP000000753">
    <property type="component" value="Chromosome"/>
</dbReference>
<dbReference type="GO" id="GO:0005829">
    <property type="term" value="C:cytosol"/>
    <property type="evidence" value="ECO:0007669"/>
    <property type="project" value="TreeGrafter"/>
</dbReference>
<dbReference type="GO" id="GO:0070043">
    <property type="term" value="F:rRNA (guanine-N7-)-methyltransferase activity"/>
    <property type="evidence" value="ECO:0007669"/>
    <property type="project" value="UniProtKB-UniRule"/>
</dbReference>
<dbReference type="CDD" id="cd02440">
    <property type="entry name" value="AdoMet_MTases"/>
    <property type="match status" value="1"/>
</dbReference>
<dbReference type="FunFam" id="3.40.50.150:FF:000032">
    <property type="entry name" value="Ribosomal RNA small subunit methyltransferase G"/>
    <property type="match status" value="1"/>
</dbReference>
<dbReference type="Gene3D" id="3.40.50.150">
    <property type="entry name" value="Vaccinia Virus protein VP39"/>
    <property type="match status" value="1"/>
</dbReference>
<dbReference type="HAMAP" id="MF_00074">
    <property type="entry name" value="16SrRNA_methyltr_G"/>
    <property type="match status" value="1"/>
</dbReference>
<dbReference type="InterPro" id="IPR003682">
    <property type="entry name" value="rRNA_ssu_MeTfrase_G"/>
</dbReference>
<dbReference type="InterPro" id="IPR029063">
    <property type="entry name" value="SAM-dependent_MTases_sf"/>
</dbReference>
<dbReference type="NCBIfam" id="TIGR00138">
    <property type="entry name" value="rsmG_gidB"/>
    <property type="match status" value="1"/>
</dbReference>
<dbReference type="PANTHER" id="PTHR31760">
    <property type="entry name" value="S-ADENOSYL-L-METHIONINE-DEPENDENT METHYLTRANSFERASES SUPERFAMILY PROTEIN"/>
    <property type="match status" value="1"/>
</dbReference>
<dbReference type="PANTHER" id="PTHR31760:SF0">
    <property type="entry name" value="S-ADENOSYL-L-METHIONINE-DEPENDENT METHYLTRANSFERASES SUPERFAMILY PROTEIN"/>
    <property type="match status" value="1"/>
</dbReference>
<dbReference type="Pfam" id="PF02527">
    <property type="entry name" value="GidB"/>
    <property type="match status" value="1"/>
</dbReference>
<dbReference type="PIRSF" id="PIRSF003078">
    <property type="entry name" value="GidB"/>
    <property type="match status" value="1"/>
</dbReference>
<dbReference type="SUPFAM" id="SSF53335">
    <property type="entry name" value="S-adenosyl-L-methionine-dependent methyltransferases"/>
    <property type="match status" value="1"/>
</dbReference>
<evidence type="ECO:0000255" key="1">
    <source>
        <dbReference type="HAMAP-Rule" id="MF_00074"/>
    </source>
</evidence>
<feature type="chain" id="PRO_1000117075" description="Ribosomal RNA small subunit methyltransferase G">
    <location>
        <begin position="1"/>
        <end position="207"/>
    </location>
</feature>
<feature type="binding site" evidence="1">
    <location>
        <position position="74"/>
    </location>
    <ligand>
        <name>S-adenosyl-L-methionine</name>
        <dbReference type="ChEBI" id="CHEBI:59789"/>
    </ligand>
</feature>
<feature type="binding site" evidence="1">
    <location>
        <position position="79"/>
    </location>
    <ligand>
        <name>S-adenosyl-L-methionine</name>
        <dbReference type="ChEBI" id="CHEBI:59789"/>
    </ligand>
</feature>
<feature type="binding site" evidence="1">
    <location>
        <begin position="125"/>
        <end position="126"/>
    </location>
    <ligand>
        <name>S-adenosyl-L-methionine</name>
        <dbReference type="ChEBI" id="CHEBI:59789"/>
    </ligand>
</feature>
<feature type="binding site" evidence="1">
    <location>
        <position position="140"/>
    </location>
    <ligand>
        <name>S-adenosyl-L-methionine</name>
        <dbReference type="ChEBI" id="CHEBI:59789"/>
    </ligand>
</feature>
<gene>
    <name evidence="1" type="primary">rsmG</name>
    <name type="ordered locus">swp_5166</name>
</gene>
<sequence length="207" mass="23527">MLFAQLNEYMAEVGLDASEQQKKQLVDFVGMLNKWNKAFNLTSVRDPEQMLIRHIMDSLVVSPHLKGSRFIDVGTGPGLPGIPLAILNPDKEFVLLDSLGKRIRFQKQVQFELGINNISSIESRVEAYQPEELFDGVLSRAFASIQDMLQWCHHLPKSDGCFYALKGQLSEDEMANMPQGFRVTDTIELVVPKLDEQRHLLRVVKQD</sequence>
<protein>
    <recommendedName>
        <fullName evidence="1">Ribosomal RNA small subunit methyltransferase G</fullName>
        <ecNumber evidence="1">2.1.1.170</ecNumber>
    </recommendedName>
    <alternativeName>
        <fullName evidence="1">16S rRNA 7-methylguanosine methyltransferase</fullName>
        <shortName evidence="1">16S rRNA m7G methyltransferase</shortName>
    </alternativeName>
</protein>
<reference key="1">
    <citation type="journal article" date="2008" name="PLoS ONE">
        <title>Environmental adaptation: genomic analysis of the piezotolerant and psychrotolerant deep-sea iron reducing bacterium Shewanella piezotolerans WP3.</title>
        <authorList>
            <person name="Wang F."/>
            <person name="Wang J."/>
            <person name="Jian H."/>
            <person name="Zhang B."/>
            <person name="Li S."/>
            <person name="Wang F."/>
            <person name="Zeng X."/>
            <person name="Gao L."/>
            <person name="Bartlett D.H."/>
            <person name="Yu J."/>
            <person name="Hu S."/>
            <person name="Xiao X."/>
        </authorList>
    </citation>
    <scope>NUCLEOTIDE SEQUENCE [LARGE SCALE GENOMIC DNA]</scope>
    <source>
        <strain>WP3 / JCM 13877</strain>
    </source>
</reference>
<organism>
    <name type="scientific">Shewanella piezotolerans (strain WP3 / JCM 13877)</name>
    <dbReference type="NCBI Taxonomy" id="225849"/>
    <lineage>
        <taxon>Bacteria</taxon>
        <taxon>Pseudomonadati</taxon>
        <taxon>Pseudomonadota</taxon>
        <taxon>Gammaproteobacteria</taxon>
        <taxon>Alteromonadales</taxon>
        <taxon>Shewanellaceae</taxon>
        <taxon>Shewanella</taxon>
    </lineage>
</organism>
<name>RSMG_SHEPW</name>